<feature type="chain" id="PRO_0000057688" description="Beta-xylosidase">
    <location>
        <begin position="1"/>
        <end position="488"/>
    </location>
</feature>
<feature type="active site" description="Proton donor" evidence="2">
    <location>
        <position position="163"/>
    </location>
</feature>
<feature type="active site" description="Nucleophile" evidence="1">
    <location>
        <position position="275"/>
    </location>
</feature>
<proteinExistence type="inferred from homology"/>
<gene>
    <name type="primary">xynB</name>
</gene>
<reference key="1">
    <citation type="journal article" date="1990" name="Appl. Environ. Microbiol.">
        <title>Cloning, sequence analysis, and expression of genes encoding xylan-degrading enzymes from the thermophile 'Caldocellum saccharolyticum'.</title>
        <authorList>
            <person name="Luethi E."/>
            <person name="Love D.R."/>
            <person name="McAnulty J."/>
            <person name="Wallace C."/>
            <person name="Caughey P.A."/>
            <person name="Saul D.J."/>
            <person name="Bergquist P.L."/>
        </authorList>
    </citation>
    <scope>NUCLEOTIDE SEQUENCE [GENOMIC DNA]</scope>
</reference>
<reference key="2">
    <citation type="submission" date="1997-05" db="EMBL/GenBank/DDBJ databases">
        <title>A cluster of genes involved in xylan degradation cloned from the extreme thermophile Caldicellulosiruptor saccharolyticus.</title>
        <authorList>
            <person name="Te'O V.S. Jr."/>
            <person name="Gibbs M.D."/>
            <person name="Saul D.J."/>
            <person name="Bergquist P.L."/>
        </authorList>
    </citation>
    <scope>NUCLEOTIDE SEQUENCE [GENOMIC DNA]</scope>
</reference>
<keyword id="KW-0119">Carbohydrate metabolism</keyword>
<keyword id="KW-0326">Glycosidase</keyword>
<keyword id="KW-0378">Hydrolase</keyword>
<keyword id="KW-0624">Polysaccharide degradation</keyword>
<keyword id="KW-0858">Xylan degradation</keyword>
<sequence length="488" mass="56366">MERRKIMKITINYGKRLGKINKFWAKCVGSCHATTALREDWRKQLKKCRDELGFEYIRFHGWLNDDMSVCFRNDDGLLSFSFFNIDSIIDFLLEIGMKPFIELSFMPEALASGTKTVFHYKGNITPPKSYEEWGQLIEELARHLISRYGKNEVREWFFEVWNEPNLKDFFWAGTMEEYFKLYKYAAFAIKKVDSELRVGGPATAIDAWIPELKDFCTKNGVPIDFISTHQYPTDLAFSTSSNMEEAMAKAKRGELAERVKKALEEAYPLPVYYTEWNNSPSPRDPYHDIPYDAAFIVKTIIDIIDLPLGCYSYWTFTDIFEECGQSSLPFHGGFGLLNIHGIPKPSYRAFQILDKLNGERIEIEFEDKSPTIDCIAVQNEREIILVISNHNVPLSPIDTENIKVVLKGIENCREVFVERIDEYNANPKRVWLEMGSPAYLNREQIEELIKASELKKEKVSWGIVNNNEITFDLSVLPHSVVAVTIKNG</sequence>
<comment type="function">
    <text>Beta-xylosidase is an intracellular xylan-degrading enzyme.</text>
</comment>
<comment type="catalytic activity">
    <reaction>
        <text>Hydrolysis of (1-&gt;4)-beta-D-xylans, to remove successive D-xylose residues from the non-reducing termini.</text>
        <dbReference type="EC" id="3.2.1.37"/>
    </reaction>
</comment>
<comment type="similarity">
    <text evidence="3">Belongs to the glycosyl hydrolase 39 family.</text>
</comment>
<comment type="caution">
    <text evidence="3">It is uncertain whether Met-1 or Met-7 is the initiator.</text>
</comment>
<name>XYNB_CALSA</name>
<dbReference type="EC" id="3.2.1.37"/>
<dbReference type="EMBL" id="M34459">
    <property type="protein sequence ID" value="AAA23063.1"/>
    <property type="molecule type" value="Genomic_DNA"/>
</dbReference>
<dbReference type="EMBL" id="AF005383">
    <property type="protein sequence ID" value="AAB87376.1"/>
    <property type="molecule type" value="Genomic_DNA"/>
</dbReference>
<dbReference type="PIR" id="T30914">
    <property type="entry name" value="T30914"/>
</dbReference>
<dbReference type="SMR" id="P23552"/>
<dbReference type="CAZy" id="GH39">
    <property type="family name" value="Glycoside Hydrolase Family 39"/>
</dbReference>
<dbReference type="BRENDA" id="3.2.1.37">
    <property type="organism ID" value="1055"/>
</dbReference>
<dbReference type="GO" id="GO:0009044">
    <property type="term" value="F:xylan 1,4-beta-xylosidase activity"/>
    <property type="evidence" value="ECO:0007669"/>
    <property type="project" value="UniProtKB-EC"/>
</dbReference>
<dbReference type="GO" id="GO:0045493">
    <property type="term" value="P:xylan catabolic process"/>
    <property type="evidence" value="ECO:0007669"/>
    <property type="project" value="UniProtKB-KW"/>
</dbReference>
<dbReference type="Gene3D" id="3.20.20.80">
    <property type="entry name" value="Glycosidases"/>
    <property type="match status" value="1"/>
</dbReference>
<dbReference type="Gene3D" id="2.60.40.1500">
    <property type="entry name" value="Glycosyl hydrolase domain, family 39"/>
    <property type="match status" value="1"/>
</dbReference>
<dbReference type="InterPro" id="IPR049165">
    <property type="entry name" value="GH39_as"/>
</dbReference>
<dbReference type="InterPro" id="IPR049166">
    <property type="entry name" value="GH39_cat"/>
</dbReference>
<dbReference type="InterPro" id="IPR000514">
    <property type="entry name" value="Glyco_hydro_39"/>
</dbReference>
<dbReference type="InterPro" id="IPR017853">
    <property type="entry name" value="Glycoside_hydrolase_SF"/>
</dbReference>
<dbReference type="InterPro" id="IPR051923">
    <property type="entry name" value="Glycosyl_Hydrolase_39"/>
</dbReference>
<dbReference type="PANTHER" id="PTHR12631">
    <property type="entry name" value="ALPHA-L-IDURONIDASE"/>
    <property type="match status" value="1"/>
</dbReference>
<dbReference type="PANTHER" id="PTHR12631:SF10">
    <property type="entry name" value="BETA-XYLOSIDASE-LIKE PROTEIN-RELATED"/>
    <property type="match status" value="1"/>
</dbReference>
<dbReference type="Pfam" id="PF01229">
    <property type="entry name" value="Glyco_hydro_39"/>
    <property type="match status" value="1"/>
</dbReference>
<dbReference type="PRINTS" id="PR00745">
    <property type="entry name" value="GLHYDRLASE39"/>
</dbReference>
<dbReference type="SUPFAM" id="SSF51445">
    <property type="entry name" value="(Trans)glycosidases"/>
    <property type="match status" value="1"/>
</dbReference>
<dbReference type="SUPFAM" id="SSF51011">
    <property type="entry name" value="Glycosyl hydrolase domain"/>
    <property type="match status" value="1"/>
</dbReference>
<dbReference type="PROSITE" id="PS01027">
    <property type="entry name" value="GLYCOSYL_HYDROL_F39"/>
    <property type="match status" value="1"/>
</dbReference>
<organism>
    <name type="scientific">Caldicellulosiruptor saccharolyticus</name>
    <name type="common">Caldocellum saccharolyticum</name>
    <dbReference type="NCBI Taxonomy" id="44001"/>
    <lineage>
        <taxon>Bacteria</taxon>
        <taxon>Bacillati</taxon>
        <taxon>Bacillota</taxon>
        <taxon>Bacillota incertae sedis</taxon>
        <taxon>Caldicellulosiruptorales</taxon>
        <taxon>Caldicellulosiruptoraceae</taxon>
        <taxon>Caldicellulosiruptor</taxon>
    </lineage>
</organism>
<evidence type="ECO:0000250" key="1"/>
<evidence type="ECO:0000255" key="2">
    <source>
        <dbReference type="PROSITE-ProRule" id="PRU10068"/>
    </source>
</evidence>
<evidence type="ECO:0000305" key="3"/>
<protein>
    <recommendedName>
        <fullName>Beta-xylosidase</fullName>
        <ecNumber>3.2.1.37</ecNumber>
    </recommendedName>
    <alternativeName>
        <fullName>1,4-beta-D-xylan xylohydrolase</fullName>
    </alternativeName>
    <alternativeName>
        <fullName>Xylan 1,4-beta-xylosidase</fullName>
    </alternativeName>
</protein>
<accession>P23552</accession>